<accession>Q99395</accession>
<accession>D6W3E1</accession>
<gene>
    <name type="ordered locus">YPL229W</name>
    <name type="ORF">P1429</name>
</gene>
<proteinExistence type="evidence at protein level"/>
<reference key="1">
    <citation type="journal article" date="1997" name="Nature">
        <title>The nucleotide sequence of Saccharomyces cerevisiae chromosome XVI.</title>
        <authorList>
            <person name="Bussey H."/>
            <person name="Storms R.K."/>
            <person name="Ahmed A."/>
            <person name="Albermann K."/>
            <person name="Allen E."/>
            <person name="Ansorge W."/>
            <person name="Araujo R."/>
            <person name="Aparicio A."/>
            <person name="Barrell B.G."/>
            <person name="Badcock K."/>
            <person name="Benes V."/>
            <person name="Botstein D."/>
            <person name="Bowman S."/>
            <person name="Brueckner M."/>
            <person name="Carpenter J."/>
            <person name="Cherry J.M."/>
            <person name="Chung E."/>
            <person name="Churcher C.M."/>
            <person name="Coster F."/>
            <person name="Davis K."/>
            <person name="Davis R.W."/>
            <person name="Dietrich F.S."/>
            <person name="Delius H."/>
            <person name="DiPaolo T."/>
            <person name="Dubois E."/>
            <person name="Duesterhoeft A."/>
            <person name="Duncan M."/>
            <person name="Floeth M."/>
            <person name="Fortin N."/>
            <person name="Friesen J.D."/>
            <person name="Fritz C."/>
            <person name="Goffeau A."/>
            <person name="Hall J."/>
            <person name="Hebling U."/>
            <person name="Heumann K."/>
            <person name="Hilbert H."/>
            <person name="Hillier L.W."/>
            <person name="Hunicke-Smith S."/>
            <person name="Hyman R.W."/>
            <person name="Johnston M."/>
            <person name="Kalman S."/>
            <person name="Kleine K."/>
            <person name="Komp C."/>
            <person name="Kurdi O."/>
            <person name="Lashkari D."/>
            <person name="Lew H."/>
            <person name="Lin A."/>
            <person name="Lin D."/>
            <person name="Louis E.J."/>
            <person name="Marathe R."/>
            <person name="Messenguy F."/>
            <person name="Mewes H.-W."/>
            <person name="Mirtipati S."/>
            <person name="Moestl D."/>
            <person name="Mueller-Auer S."/>
            <person name="Namath A."/>
            <person name="Nentwich U."/>
            <person name="Oefner P."/>
            <person name="Pearson D."/>
            <person name="Petel F.X."/>
            <person name="Pohl T.M."/>
            <person name="Purnelle B."/>
            <person name="Rajandream M.A."/>
            <person name="Rechmann S."/>
            <person name="Rieger M."/>
            <person name="Riles L."/>
            <person name="Roberts D."/>
            <person name="Schaefer M."/>
            <person name="Scharfe M."/>
            <person name="Scherens B."/>
            <person name="Schramm S."/>
            <person name="Schroeder M."/>
            <person name="Sdicu A.-M."/>
            <person name="Tettelin H."/>
            <person name="Urrestarazu L.A."/>
            <person name="Ushinsky S."/>
            <person name="Vierendeels F."/>
            <person name="Vissers S."/>
            <person name="Voss H."/>
            <person name="Walsh S.V."/>
            <person name="Wambutt R."/>
            <person name="Wang Y."/>
            <person name="Wedler E."/>
            <person name="Wedler H."/>
            <person name="Winnett E."/>
            <person name="Zhong W.-W."/>
            <person name="Zollner A."/>
            <person name="Vo D.H."/>
            <person name="Hani J."/>
        </authorList>
    </citation>
    <scope>NUCLEOTIDE SEQUENCE [LARGE SCALE GENOMIC DNA]</scope>
    <source>
        <strain>ATCC 204508 / S288c</strain>
    </source>
</reference>
<reference key="2">
    <citation type="journal article" date="2014" name="G3 (Bethesda)">
        <title>The reference genome sequence of Saccharomyces cerevisiae: Then and now.</title>
        <authorList>
            <person name="Engel S.R."/>
            <person name="Dietrich F.S."/>
            <person name="Fisk D.G."/>
            <person name="Binkley G."/>
            <person name="Balakrishnan R."/>
            <person name="Costanzo M.C."/>
            <person name="Dwight S.S."/>
            <person name="Hitz B.C."/>
            <person name="Karra K."/>
            <person name="Nash R.S."/>
            <person name="Weng S."/>
            <person name="Wong E.D."/>
            <person name="Lloyd P."/>
            <person name="Skrzypek M.S."/>
            <person name="Miyasato S.R."/>
            <person name="Simison M."/>
            <person name="Cherry J.M."/>
        </authorList>
    </citation>
    <scope>GENOME REANNOTATION</scope>
    <source>
        <strain>ATCC 204508 / S288c</strain>
    </source>
</reference>
<reference key="3">
    <citation type="journal article" date="2003" name="Nature">
        <title>Global analysis of protein localization in budding yeast.</title>
        <authorList>
            <person name="Huh W.-K."/>
            <person name="Falvo J.V."/>
            <person name="Gerke L.C."/>
            <person name="Carroll A.S."/>
            <person name="Howson R.W."/>
            <person name="Weissman J.S."/>
            <person name="O'Shea E.K."/>
        </authorList>
    </citation>
    <scope>SUBCELLULAR LOCATION [LARGE SCALE ANALYSIS]</scope>
</reference>
<reference key="4">
    <citation type="journal article" date="2003" name="Nature">
        <title>Global analysis of protein expression in yeast.</title>
        <authorList>
            <person name="Ghaemmaghami S."/>
            <person name="Huh W.-K."/>
            <person name="Bower K."/>
            <person name="Howson R.W."/>
            <person name="Belle A."/>
            <person name="Dephoure N."/>
            <person name="O'Shea E.K."/>
            <person name="Weissman J.S."/>
        </authorList>
    </citation>
    <scope>LEVEL OF PROTEIN EXPRESSION [LARGE SCALE ANALYSIS]</scope>
</reference>
<reference key="5">
    <citation type="journal article" date="2008" name="Mol. Cell. Proteomics">
        <title>A multidimensional chromatography technology for in-depth phosphoproteome analysis.</title>
        <authorList>
            <person name="Albuquerque C.P."/>
            <person name="Smolka M.B."/>
            <person name="Payne S.H."/>
            <person name="Bafna V."/>
            <person name="Eng J."/>
            <person name="Zhou H."/>
        </authorList>
    </citation>
    <scope>PHOSPHORYLATION [LARGE SCALE ANALYSIS] AT SER-68</scope>
    <scope>IDENTIFICATION BY MASS SPECTROMETRY [LARGE SCALE ANALYSIS]</scope>
</reference>
<protein>
    <recommendedName>
        <fullName>Uncharacterized protein YPL229W</fullName>
    </recommendedName>
</protein>
<sequence length="206" mass="23260">MMPYNTPPNIQEPMNFASSNPFGIIPDALSFQNFKYDRLQQQQQQQQQQQQNRTASSLQQPQQQQPISPPLFLVGAGTSENSNLNKNANTSTIPPLLFSRSSQHYVVPDIDHSSIIYKNNICKSFKDDLFFCPRSLLSLEEQQACEKMDRLTAEQMSLYHQNTQSSSNPGSMSSSPPNSASSIFNSRPKFNPYTSQSFNPLESVQE</sequence>
<feature type="chain" id="PRO_0000242135" description="Uncharacterized protein YPL229W">
    <location>
        <begin position="1"/>
        <end position="206"/>
    </location>
</feature>
<feature type="region of interest" description="Disordered" evidence="1">
    <location>
        <begin position="38"/>
        <end position="88"/>
    </location>
</feature>
<feature type="region of interest" description="Disordered" evidence="1">
    <location>
        <begin position="160"/>
        <end position="206"/>
    </location>
</feature>
<feature type="compositionally biased region" description="Low complexity" evidence="1">
    <location>
        <begin position="40"/>
        <end position="73"/>
    </location>
</feature>
<feature type="compositionally biased region" description="Polar residues" evidence="1">
    <location>
        <begin position="78"/>
        <end position="88"/>
    </location>
</feature>
<feature type="compositionally biased region" description="Low complexity" evidence="1">
    <location>
        <begin position="165"/>
        <end position="186"/>
    </location>
</feature>
<feature type="compositionally biased region" description="Polar residues" evidence="1">
    <location>
        <begin position="192"/>
        <end position="206"/>
    </location>
</feature>
<feature type="modified residue" description="Phosphoserine" evidence="4">
    <location>
        <position position="68"/>
    </location>
</feature>
<name>YP229_YEAST</name>
<keyword id="KW-0963">Cytoplasm</keyword>
<keyword id="KW-0597">Phosphoprotein</keyword>
<keyword id="KW-1185">Reference proteome</keyword>
<organism>
    <name type="scientific">Saccharomyces cerevisiae (strain ATCC 204508 / S288c)</name>
    <name type="common">Baker's yeast</name>
    <dbReference type="NCBI Taxonomy" id="559292"/>
    <lineage>
        <taxon>Eukaryota</taxon>
        <taxon>Fungi</taxon>
        <taxon>Dikarya</taxon>
        <taxon>Ascomycota</taxon>
        <taxon>Saccharomycotina</taxon>
        <taxon>Saccharomycetes</taxon>
        <taxon>Saccharomycetales</taxon>
        <taxon>Saccharomycetaceae</taxon>
        <taxon>Saccharomyces</taxon>
    </lineage>
</organism>
<evidence type="ECO:0000256" key="1">
    <source>
        <dbReference type="SAM" id="MobiDB-lite"/>
    </source>
</evidence>
<evidence type="ECO:0000269" key="2">
    <source>
    </source>
</evidence>
<evidence type="ECO:0000269" key="3">
    <source>
    </source>
</evidence>
<evidence type="ECO:0007744" key="4">
    <source>
    </source>
</evidence>
<dbReference type="EMBL" id="X94561">
    <property type="protein sequence ID" value="CAA64258.1"/>
    <property type="molecule type" value="Genomic_DNA"/>
</dbReference>
<dbReference type="EMBL" id="Z73585">
    <property type="protein sequence ID" value="CAA97945.1"/>
    <property type="molecule type" value="Genomic_DNA"/>
</dbReference>
<dbReference type="EMBL" id="BK006949">
    <property type="protein sequence ID" value="DAA11207.1"/>
    <property type="molecule type" value="Genomic_DNA"/>
</dbReference>
<dbReference type="PIR" id="S61705">
    <property type="entry name" value="S61705"/>
</dbReference>
<dbReference type="RefSeq" id="NP_015095.1">
    <property type="nucleotide sequence ID" value="NM_001184043.1"/>
</dbReference>
<dbReference type="BioGRID" id="35956">
    <property type="interactions" value="27"/>
</dbReference>
<dbReference type="DIP" id="DIP-1715N"/>
<dbReference type="FunCoup" id="Q99395">
    <property type="interactions" value="37"/>
</dbReference>
<dbReference type="IntAct" id="Q99395">
    <property type="interactions" value="2"/>
</dbReference>
<dbReference type="MINT" id="Q99395"/>
<dbReference type="iPTMnet" id="Q99395"/>
<dbReference type="PaxDb" id="4932-YPL229W"/>
<dbReference type="PeptideAtlas" id="Q99395"/>
<dbReference type="EnsemblFungi" id="YPL229W_mRNA">
    <property type="protein sequence ID" value="YPL229W"/>
    <property type="gene ID" value="YPL229W"/>
</dbReference>
<dbReference type="GeneID" id="855872"/>
<dbReference type="KEGG" id="sce:YPL229W"/>
<dbReference type="AGR" id="SGD:S000006150"/>
<dbReference type="SGD" id="S000006150">
    <property type="gene designation" value="YPL229W"/>
</dbReference>
<dbReference type="VEuPathDB" id="FungiDB:YPL229W"/>
<dbReference type="eggNOG" id="ENOG502SD3N">
    <property type="taxonomic scope" value="Eukaryota"/>
</dbReference>
<dbReference type="GeneTree" id="ENSGT00940000176712"/>
<dbReference type="HOGENOM" id="CLU_1372910_0_0_1"/>
<dbReference type="InParanoid" id="Q99395"/>
<dbReference type="OMA" id="CYQLDML"/>
<dbReference type="OrthoDB" id="4070040at2759"/>
<dbReference type="BioCyc" id="YEAST:G3O-34117-MONOMER"/>
<dbReference type="BioGRID-ORCS" id="855872">
    <property type="hits" value="1 hit in 10 CRISPR screens"/>
</dbReference>
<dbReference type="PRO" id="PR:Q99395"/>
<dbReference type="Proteomes" id="UP000002311">
    <property type="component" value="Chromosome XVI"/>
</dbReference>
<dbReference type="RNAct" id="Q99395">
    <property type="molecule type" value="protein"/>
</dbReference>
<dbReference type="GO" id="GO:0005737">
    <property type="term" value="C:cytoplasm"/>
    <property type="evidence" value="ECO:0007005"/>
    <property type="project" value="SGD"/>
</dbReference>
<comment type="subcellular location">
    <subcellularLocation>
        <location evidence="2">Cytoplasm</location>
    </subcellularLocation>
</comment>
<comment type="miscellaneous">
    <text evidence="3">Present with 922 molecules/cell in log phase SD medium.</text>
</comment>